<protein>
    <recommendedName>
        <fullName evidence="1">Aspartate--tRNA(Asp/Asn) ligase</fullName>
        <ecNumber evidence="1">6.1.1.23</ecNumber>
    </recommendedName>
    <alternativeName>
        <fullName evidence="1">Aspartyl-tRNA synthetase</fullName>
        <shortName evidence="1">AspRS</shortName>
    </alternativeName>
    <alternativeName>
        <fullName evidence="1">Non-discriminating aspartyl-tRNA synthetase</fullName>
        <shortName evidence="1">ND-AspRS</shortName>
    </alternativeName>
</protein>
<gene>
    <name evidence="1" type="primary">aspS</name>
    <name type="ordered locus">A1E_00745</name>
</gene>
<keyword id="KW-0030">Aminoacyl-tRNA synthetase</keyword>
<keyword id="KW-0067">ATP-binding</keyword>
<keyword id="KW-0963">Cytoplasm</keyword>
<keyword id="KW-0436">Ligase</keyword>
<keyword id="KW-0547">Nucleotide-binding</keyword>
<keyword id="KW-0648">Protein biosynthesis</keyword>
<accession>A8EXL4</accession>
<evidence type="ECO:0000255" key="1">
    <source>
        <dbReference type="HAMAP-Rule" id="MF_00044"/>
    </source>
</evidence>
<name>SYDND_RICCK</name>
<organism>
    <name type="scientific">Rickettsia canadensis (strain McKiel)</name>
    <dbReference type="NCBI Taxonomy" id="293613"/>
    <lineage>
        <taxon>Bacteria</taxon>
        <taxon>Pseudomonadati</taxon>
        <taxon>Pseudomonadota</taxon>
        <taxon>Alphaproteobacteria</taxon>
        <taxon>Rickettsiales</taxon>
        <taxon>Rickettsiaceae</taxon>
        <taxon>Rickettsieae</taxon>
        <taxon>Rickettsia</taxon>
        <taxon>belli group</taxon>
    </lineage>
</organism>
<proteinExistence type="inferred from homology"/>
<sequence length="602" mass="68251">MHKYRTHNCNALQISDVGKEVKLSGWVHRRRDHGNLVFIDLRDHYGITQIVFTDQNLQLMEMASRLRYESVITVIGKVVARSGDTINDTLTTGHIEILAREFIVESAADTLPFVINTEKDAPEDLRLKHRFLDLRREKLHNNIILRSQIISHIRHLMTARGFTEFQTPILTASSPEGARDFLVPSRMHSGKFYALPQAPQQFKQLLMVSGFDRYFQIAPCFRDEDARADRSPGEFYQLDVEMSFVTQEDVFSTIEPVMYDLFTKFTDKKVSETPFIRIPYNESMLKYGSDKPDLRNPIIIADVTEIFRDSDFTIFRENIKKGSVVRAIPAPKAAAHARSFFDKMIEFAISEGAGGLGYIQFSKNDKAKGPVAKFLSPQQLESLKATVNISDGDAVFFVSDKKEKAAKLAGKVRIRISDELDLLEKDCFKFCWITDFPFYELNEETAKIDFSHNPFSMPQGGLDALKNAKTTAELLELTAYQYDIVCNGIELSSGAIRNHKPEIMYKAFSIAGYSEEEVNKRFGSMIRAFKFGAPPHGGIAPGIDRIVMLLAEATNIREIIAFPLNQQAEDLLMNAPNYVEDKALKELGIMLLPSARKNVEQE</sequence>
<reference key="1">
    <citation type="submission" date="2007-09" db="EMBL/GenBank/DDBJ databases">
        <title>Complete genome sequence of Rickettsia canadensis.</title>
        <authorList>
            <person name="Madan A."/>
            <person name="Fahey J."/>
            <person name="Helton E."/>
            <person name="Ketteman M."/>
            <person name="Madan A."/>
            <person name="Rodrigues S."/>
            <person name="Sanchez A."/>
            <person name="Whiting M."/>
            <person name="Dasch G."/>
            <person name="Eremeeva M."/>
        </authorList>
    </citation>
    <scope>NUCLEOTIDE SEQUENCE [LARGE SCALE GENOMIC DNA]</scope>
    <source>
        <strain>McKiel</strain>
    </source>
</reference>
<comment type="function">
    <text evidence="1">Aspartyl-tRNA synthetase with relaxed tRNA specificity since it is able to aspartylate not only its cognate tRNA(Asp) but also tRNA(Asn). Reaction proceeds in two steps: L-aspartate is first activated by ATP to form Asp-AMP and then transferred to the acceptor end of tRNA(Asp/Asn).</text>
</comment>
<comment type="catalytic activity">
    <reaction evidence="1">
        <text>tRNA(Asx) + L-aspartate + ATP = L-aspartyl-tRNA(Asx) + AMP + diphosphate</text>
        <dbReference type="Rhea" id="RHEA:18349"/>
        <dbReference type="Rhea" id="RHEA-COMP:9710"/>
        <dbReference type="Rhea" id="RHEA-COMP:9711"/>
        <dbReference type="ChEBI" id="CHEBI:29991"/>
        <dbReference type="ChEBI" id="CHEBI:30616"/>
        <dbReference type="ChEBI" id="CHEBI:33019"/>
        <dbReference type="ChEBI" id="CHEBI:78442"/>
        <dbReference type="ChEBI" id="CHEBI:78516"/>
        <dbReference type="ChEBI" id="CHEBI:456215"/>
        <dbReference type="EC" id="6.1.1.23"/>
    </reaction>
</comment>
<comment type="subunit">
    <text evidence="1">Homodimer.</text>
</comment>
<comment type="subcellular location">
    <subcellularLocation>
        <location evidence="1">Cytoplasm</location>
    </subcellularLocation>
</comment>
<comment type="similarity">
    <text evidence="1">Belongs to the class-II aminoacyl-tRNA synthetase family. Type 1 subfamily.</text>
</comment>
<dbReference type="EC" id="6.1.1.23" evidence="1"/>
<dbReference type="EMBL" id="CP000409">
    <property type="protein sequence ID" value="ABV73097.1"/>
    <property type="molecule type" value="Genomic_DNA"/>
</dbReference>
<dbReference type="RefSeq" id="WP_012148298.1">
    <property type="nucleotide sequence ID" value="NC_009879.1"/>
</dbReference>
<dbReference type="SMR" id="A8EXL4"/>
<dbReference type="STRING" id="293613.A1E_00745"/>
<dbReference type="KEGG" id="rcm:A1E_00745"/>
<dbReference type="eggNOG" id="COG0173">
    <property type="taxonomic scope" value="Bacteria"/>
</dbReference>
<dbReference type="HOGENOM" id="CLU_014330_3_2_5"/>
<dbReference type="Proteomes" id="UP000007056">
    <property type="component" value="Chromosome"/>
</dbReference>
<dbReference type="GO" id="GO:0005737">
    <property type="term" value="C:cytoplasm"/>
    <property type="evidence" value="ECO:0007669"/>
    <property type="project" value="UniProtKB-SubCell"/>
</dbReference>
<dbReference type="GO" id="GO:0004815">
    <property type="term" value="F:aspartate-tRNA ligase activity"/>
    <property type="evidence" value="ECO:0007669"/>
    <property type="project" value="UniProtKB-UniRule"/>
</dbReference>
<dbReference type="GO" id="GO:0050560">
    <property type="term" value="F:aspartate-tRNA(Asn) ligase activity"/>
    <property type="evidence" value="ECO:0007669"/>
    <property type="project" value="UniProtKB-EC"/>
</dbReference>
<dbReference type="GO" id="GO:0005524">
    <property type="term" value="F:ATP binding"/>
    <property type="evidence" value="ECO:0007669"/>
    <property type="project" value="UniProtKB-UniRule"/>
</dbReference>
<dbReference type="GO" id="GO:0003676">
    <property type="term" value="F:nucleic acid binding"/>
    <property type="evidence" value="ECO:0007669"/>
    <property type="project" value="InterPro"/>
</dbReference>
<dbReference type="GO" id="GO:0006422">
    <property type="term" value="P:aspartyl-tRNA aminoacylation"/>
    <property type="evidence" value="ECO:0007669"/>
    <property type="project" value="UniProtKB-UniRule"/>
</dbReference>
<dbReference type="CDD" id="cd00777">
    <property type="entry name" value="AspRS_core"/>
    <property type="match status" value="1"/>
</dbReference>
<dbReference type="CDD" id="cd04317">
    <property type="entry name" value="EcAspRS_like_N"/>
    <property type="match status" value="1"/>
</dbReference>
<dbReference type="Gene3D" id="3.30.930.10">
    <property type="entry name" value="Bira Bifunctional Protein, Domain 2"/>
    <property type="match status" value="1"/>
</dbReference>
<dbReference type="Gene3D" id="3.30.1360.30">
    <property type="entry name" value="GAD-like domain"/>
    <property type="match status" value="1"/>
</dbReference>
<dbReference type="Gene3D" id="2.40.50.140">
    <property type="entry name" value="Nucleic acid-binding proteins"/>
    <property type="match status" value="1"/>
</dbReference>
<dbReference type="HAMAP" id="MF_00044">
    <property type="entry name" value="Asp_tRNA_synth_type1"/>
    <property type="match status" value="1"/>
</dbReference>
<dbReference type="InterPro" id="IPR004364">
    <property type="entry name" value="Aa-tRNA-synt_II"/>
</dbReference>
<dbReference type="InterPro" id="IPR006195">
    <property type="entry name" value="aa-tRNA-synth_II"/>
</dbReference>
<dbReference type="InterPro" id="IPR045864">
    <property type="entry name" value="aa-tRNA-synth_II/BPL/LPL"/>
</dbReference>
<dbReference type="InterPro" id="IPR004524">
    <property type="entry name" value="Asp-tRNA-ligase_1"/>
</dbReference>
<dbReference type="InterPro" id="IPR047089">
    <property type="entry name" value="Asp-tRNA-ligase_1_N"/>
</dbReference>
<dbReference type="InterPro" id="IPR002312">
    <property type="entry name" value="Asp/Asn-tRNA-synth_IIb"/>
</dbReference>
<dbReference type="InterPro" id="IPR047090">
    <property type="entry name" value="AspRS_core"/>
</dbReference>
<dbReference type="InterPro" id="IPR004115">
    <property type="entry name" value="GAD-like_sf"/>
</dbReference>
<dbReference type="InterPro" id="IPR029351">
    <property type="entry name" value="GAD_dom"/>
</dbReference>
<dbReference type="InterPro" id="IPR012340">
    <property type="entry name" value="NA-bd_OB-fold"/>
</dbReference>
<dbReference type="InterPro" id="IPR004365">
    <property type="entry name" value="NA-bd_OB_tRNA"/>
</dbReference>
<dbReference type="NCBIfam" id="TIGR00459">
    <property type="entry name" value="aspS_bact"/>
    <property type="match status" value="1"/>
</dbReference>
<dbReference type="NCBIfam" id="NF001750">
    <property type="entry name" value="PRK00476.1"/>
    <property type="match status" value="1"/>
</dbReference>
<dbReference type="PANTHER" id="PTHR22594:SF5">
    <property type="entry name" value="ASPARTATE--TRNA LIGASE, MITOCHONDRIAL"/>
    <property type="match status" value="1"/>
</dbReference>
<dbReference type="PANTHER" id="PTHR22594">
    <property type="entry name" value="ASPARTYL/LYSYL-TRNA SYNTHETASE"/>
    <property type="match status" value="1"/>
</dbReference>
<dbReference type="Pfam" id="PF02938">
    <property type="entry name" value="GAD"/>
    <property type="match status" value="1"/>
</dbReference>
<dbReference type="Pfam" id="PF00152">
    <property type="entry name" value="tRNA-synt_2"/>
    <property type="match status" value="1"/>
</dbReference>
<dbReference type="Pfam" id="PF01336">
    <property type="entry name" value="tRNA_anti-codon"/>
    <property type="match status" value="1"/>
</dbReference>
<dbReference type="PRINTS" id="PR01042">
    <property type="entry name" value="TRNASYNTHASP"/>
</dbReference>
<dbReference type="SUPFAM" id="SSF55681">
    <property type="entry name" value="Class II aaRS and biotin synthetases"/>
    <property type="match status" value="1"/>
</dbReference>
<dbReference type="SUPFAM" id="SSF55261">
    <property type="entry name" value="GAD domain-like"/>
    <property type="match status" value="1"/>
</dbReference>
<dbReference type="SUPFAM" id="SSF50249">
    <property type="entry name" value="Nucleic acid-binding proteins"/>
    <property type="match status" value="1"/>
</dbReference>
<dbReference type="PROSITE" id="PS50862">
    <property type="entry name" value="AA_TRNA_LIGASE_II"/>
    <property type="match status" value="1"/>
</dbReference>
<feature type="chain" id="PRO_1000006747" description="Aspartate--tRNA(Asp/Asn) ligase">
    <location>
        <begin position="1"/>
        <end position="602"/>
    </location>
</feature>
<feature type="region of interest" description="Aspartate" evidence="1">
    <location>
        <begin position="200"/>
        <end position="203"/>
    </location>
</feature>
<feature type="binding site" evidence="1">
    <location>
        <position position="176"/>
    </location>
    <ligand>
        <name>L-aspartate</name>
        <dbReference type="ChEBI" id="CHEBI:29991"/>
    </ligand>
</feature>
<feature type="binding site" evidence="1">
    <location>
        <begin position="222"/>
        <end position="224"/>
    </location>
    <ligand>
        <name>ATP</name>
        <dbReference type="ChEBI" id="CHEBI:30616"/>
    </ligand>
</feature>
<feature type="binding site" evidence="1">
    <location>
        <position position="222"/>
    </location>
    <ligand>
        <name>L-aspartate</name>
        <dbReference type="ChEBI" id="CHEBI:29991"/>
    </ligand>
</feature>
<feature type="binding site" evidence="1">
    <location>
        <position position="452"/>
    </location>
    <ligand>
        <name>L-aspartate</name>
        <dbReference type="ChEBI" id="CHEBI:29991"/>
    </ligand>
</feature>
<feature type="binding site" evidence="1">
    <location>
        <position position="490"/>
    </location>
    <ligand>
        <name>ATP</name>
        <dbReference type="ChEBI" id="CHEBI:30616"/>
    </ligand>
</feature>
<feature type="binding site" evidence="1">
    <location>
        <position position="497"/>
    </location>
    <ligand>
        <name>L-aspartate</name>
        <dbReference type="ChEBI" id="CHEBI:29991"/>
    </ligand>
</feature>
<feature type="binding site" evidence="1">
    <location>
        <begin position="542"/>
        <end position="545"/>
    </location>
    <ligand>
        <name>ATP</name>
        <dbReference type="ChEBI" id="CHEBI:30616"/>
    </ligand>
</feature>
<feature type="site" description="Important for tRNA non-discrimination" evidence="1">
    <location>
        <position position="33"/>
    </location>
</feature>